<protein>
    <recommendedName>
        <fullName evidence="1">Putative 3-methyladenine DNA glycosylase</fullName>
        <ecNumber evidence="1">3.2.2.-</ecNumber>
    </recommendedName>
</protein>
<name>3MGH_BURL3</name>
<sequence length="207" mass="22152">MRRGDPAPRWPGAVLPRAFFDRVATDVAPQLLNKILAAADGRAGRIVEVEAYAGAIDPAAHTYRGKTPRNATMFGPPGHLYVYFTYGMHWCCNCVCGPDGTGTGVLIRALEPLQGLERMRAARPPQTRDRDLCRGPARLTQAMGIGGAQDGVDLIGAHEGFAIVDDGSAPPADLAGGPRIGIRVGTDLPWRWSVPGNRYVSGPVTRR</sequence>
<comment type="similarity">
    <text evidence="1">Belongs to the DNA glycosylase MPG family.</text>
</comment>
<reference key="1">
    <citation type="submission" date="2005-10" db="EMBL/GenBank/DDBJ databases">
        <title>Complete sequence of chromosome 1 of Burkholderia sp. 383.</title>
        <authorList>
            <consortium name="US DOE Joint Genome Institute"/>
            <person name="Copeland A."/>
            <person name="Lucas S."/>
            <person name="Lapidus A."/>
            <person name="Barry K."/>
            <person name="Detter J.C."/>
            <person name="Glavina T."/>
            <person name="Hammon N."/>
            <person name="Israni S."/>
            <person name="Pitluck S."/>
            <person name="Chain P."/>
            <person name="Malfatti S."/>
            <person name="Shin M."/>
            <person name="Vergez L."/>
            <person name="Schmutz J."/>
            <person name="Larimer F."/>
            <person name="Land M."/>
            <person name="Kyrpides N."/>
            <person name="Lykidis A."/>
            <person name="Richardson P."/>
        </authorList>
    </citation>
    <scope>NUCLEOTIDE SEQUENCE [LARGE SCALE GENOMIC DNA]</scope>
    <source>
        <strain>ATCC 17760 / DSM 23089 / LMG 22485 / NCIMB 9086 / R18194 / 383</strain>
    </source>
</reference>
<gene>
    <name type="ordered locus">Bcep18194_A6105</name>
</gene>
<accession>Q39CW7</accession>
<organism>
    <name type="scientific">Burkholderia lata (strain ATCC 17760 / DSM 23089 / LMG 22485 / NCIMB 9086 / R18194 / 383)</name>
    <dbReference type="NCBI Taxonomy" id="482957"/>
    <lineage>
        <taxon>Bacteria</taxon>
        <taxon>Pseudomonadati</taxon>
        <taxon>Pseudomonadota</taxon>
        <taxon>Betaproteobacteria</taxon>
        <taxon>Burkholderiales</taxon>
        <taxon>Burkholderiaceae</taxon>
        <taxon>Burkholderia</taxon>
        <taxon>Burkholderia cepacia complex</taxon>
    </lineage>
</organism>
<proteinExistence type="inferred from homology"/>
<keyword id="KW-0227">DNA damage</keyword>
<keyword id="KW-0234">DNA repair</keyword>
<keyword id="KW-0378">Hydrolase</keyword>
<dbReference type="EC" id="3.2.2.-" evidence="1"/>
<dbReference type="EMBL" id="CP000151">
    <property type="protein sequence ID" value="ABB09699.1"/>
    <property type="molecule type" value="Genomic_DNA"/>
</dbReference>
<dbReference type="RefSeq" id="WP_011353209.1">
    <property type="nucleotide sequence ID" value="NC_007510.1"/>
</dbReference>
<dbReference type="SMR" id="Q39CW7"/>
<dbReference type="GeneID" id="45095986"/>
<dbReference type="KEGG" id="bur:Bcep18194_A6105"/>
<dbReference type="PATRIC" id="fig|482957.22.peg.3109"/>
<dbReference type="HOGENOM" id="CLU_060471_3_0_4"/>
<dbReference type="Proteomes" id="UP000002705">
    <property type="component" value="Chromosome 1"/>
</dbReference>
<dbReference type="GO" id="GO:0003905">
    <property type="term" value="F:alkylbase DNA N-glycosylase activity"/>
    <property type="evidence" value="ECO:0007669"/>
    <property type="project" value="InterPro"/>
</dbReference>
<dbReference type="GO" id="GO:0003677">
    <property type="term" value="F:DNA binding"/>
    <property type="evidence" value="ECO:0007669"/>
    <property type="project" value="InterPro"/>
</dbReference>
<dbReference type="GO" id="GO:0006284">
    <property type="term" value="P:base-excision repair"/>
    <property type="evidence" value="ECO:0007669"/>
    <property type="project" value="InterPro"/>
</dbReference>
<dbReference type="CDD" id="cd00540">
    <property type="entry name" value="AAG"/>
    <property type="match status" value="1"/>
</dbReference>
<dbReference type="FunFam" id="3.10.300.10:FF:000001">
    <property type="entry name" value="Putative 3-methyladenine DNA glycosylase"/>
    <property type="match status" value="1"/>
</dbReference>
<dbReference type="Gene3D" id="3.10.300.10">
    <property type="entry name" value="Methylpurine-DNA glycosylase (MPG)"/>
    <property type="match status" value="1"/>
</dbReference>
<dbReference type="HAMAP" id="MF_00527">
    <property type="entry name" value="3MGH"/>
    <property type="match status" value="1"/>
</dbReference>
<dbReference type="InterPro" id="IPR011034">
    <property type="entry name" value="Formyl_transferase-like_C_sf"/>
</dbReference>
<dbReference type="InterPro" id="IPR003180">
    <property type="entry name" value="MPG"/>
</dbReference>
<dbReference type="InterPro" id="IPR036995">
    <property type="entry name" value="MPG_sf"/>
</dbReference>
<dbReference type="NCBIfam" id="TIGR00567">
    <property type="entry name" value="3mg"/>
    <property type="match status" value="1"/>
</dbReference>
<dbReference type="NCBIfam" id="NF002003">
    <property type="entry name" value="PRK00802.1-3"/>
    <property type="match status" value="1"/>
</dbReference>
<dbReference type="PANTHER" id="PTHR10429">
    <property type="entry name" value="DNA-3-METHYLADENINE GLYCOSYLASE"/>
    <property type="match status" value="1"/>
</dbReference>
<dbReference type="PANTHER" id="PTHR10429:SF0">
    <property type="entry name" value="DNA-3-METHYLADENINE GLYCOSYLASE"/>
    <property type="match status" value="1"/>
</dbReference>
<dbReference type="Pfam" id="PF02245">
    <property type="entry name" value="Pur_DNA_glyco"/>
    <property type="match status" value="1"/>
</dbReference>
<dbReference type="SUPFAM" id="SSF50486">
    <property type="entry name" value="FMT C-terminal domain-like"/>
    <property type="match status" value="1"/>
</dbReference>
<evidence type="ECO:0000255" key="1">
    <source>
        <dbReference type="HAMAP-Rule" id="MF_00527"/>
    </source>
</evidence>
<feature type="chain" id="PRO_0000265003" description="Putative 3-methyladenine DNA glycosylase">
    <location>
        <begin position="1"/>
        <end position="207"/>
    </location>
</feature>